<gene>
    <name evidence="1" type="primary">pncB</name>
    <name type="ordered locus">Avi_0250</name>
</gene>
<organism>
    <name type="scientific">Allorhizobium ampelinum (strain ATCC BAA-846 / DSM 112012 / S4)</name>
    <name type="common">Agrobacterium vitis (strain S4)</name>
    <dbReference type="NCBI Taxonomy" id="311402"/>
    <lineage>
        <taxon>Bacteria</taxon>
        <taxon>Pseudomonadati</taxon>
        <taxon>Pseudomonadota</taxon>
        <taxon>Alphaproteobacteria</taxon>
        <taxon>Hyphomicrobiales</taxon>
        <taxon>Rhizobiaceae</taxon>
        <taxon>Rhizobium/Agrobacterium group</taxon>
        <taxon>Allorhizobium</taxon>
        <taxon>Allorhizobium ampelinum</taxon>
    </lineage>
</organism>
<dbReference type="EC" id="6.3.4.21" evidence="1"/>
<dbReference type="EMBL" id="CP000633">
    <property type="protein sequence ID" value="ACM35160.1"/>
    <property type="molecule type" value="Genomic_DNA"/>
</dbReference>
<dbReference type="RefSeq" id="WP_012654690.1">
    <property type="nucleotide sequence ID" value="NC_011989.1"/>
</dbReference>
<dbReference type="SMR" id="B9JYR4"/>
<dbReference type="STRING" id="311402.Avi_0250"/>
<dbReference type="KEGG" id="avi:Avi_0250"/>
<dbReference type="eggNOG" id="COG1488">
    <property type="taxonomic scope" value="Bacteria"/>
</dbReference>
<dbReference type="HOGENOM" id="CLU_030991_1_0_5"/>
<dbReference type="UniPathway" id="UPA00253">
    <property type="reaction ID" value="UER00457"/>
</dbReference>
<dbReference type="Proteomes" id="UP000001596">
    <property type="component" value="Chromosome 1"/>
</dbReference>
<dbReference type="GO" id="GO:0005829">
    <property type="term" value="C:cytosol"/>
    <property type="evidence" value="ECO:0007669"/>
    <property type="project" value="TreeGrafter"/>
</dbReference>
<dbReference type="GO" id="GO:0004516">
    <property type="term" value="F:nicotinate phosphoribosyltransferase activity"/>
    <property type="evidence" value="ECO:0007669"/>
    <property type="project" value="UniProtKB-UniRule"/>
</dbReference>
<dbReference type="GO" id="GO:0034355">
    <property type="term" value="P:NAD biosynthetic process via the salvage pathway"/>
    <property type="evidence" value="ECO:0007669"/>
    <property type="project" value="TreeGrafter"/>
</dbReference>
<dbReference type="Gene3D" id="3.20.140.10">
    <property type="entry name" value="nicotinate phosphoribosyltransferase"/>
    <property type="match status" value="1"/>
</dbReference>
<dbReference type="HAMAP" id="MF_00570">
    <property type="entry name" value="NAPRTase"/>
    <property type="match status" value="1"/>
</dbReference>
<dbReference type="InterPro" id="IPR041525">
    <property type="entry name" value="N/Namide_PRibTrfase"/>
</dbReference>
<dbReference type="InterPro" id="IPR040727">
    <property type="entry name" value="NAPRTase_N"/>
</dbReference>
<dbReference type="InterPro" id="IPR006406">
    <property type="entry name" value="Nic_PRibTrfase"/>
</dbReference>
<dbReference type="InterPro" id="IPR007229">
    <property type="entry name" value="Nic_PRibTrfase-Fam"/>
</dbReference>
<dbReference type="InterPro" id="IPR036068">
    <property type="entry name" value="Nicotinate_pribotase-like_C"/>
</dbReference>
<dbReference type="NCBIfam" id="TIGR01514">
    <property type="entry name" value="NAPRTase"/>
    <property type="match status" value="1"/>
</dbReference>
<dbReference type="NCBIfam" id="NF003704">
    <property type="entry name" value="PRK05321.1"/>
    <property type="match status" value="1"/>
</dbReference>
<dbReference type="PANTHER" id="PTHR11098">
    <property type="entry name" value="NICOTINATE PHOSPHORIBOSYLTRANSFERASE"/>
    <property type="match status" value="1"/>
</dbReference>
<dbReference type="PANTHER" id="PTHR11098:SF1">
    <property type="entry name" value="NICOTINATE PHOSPHORIBOSYLTRANSFERASE"/>
    <property type="match status" value="1"/>
</dbReference>
<dbReference type="Pfam" id="PF04095">
    <property type="entry name" value="NAPRTase"/>
    <property type="match status" value="1"/>
</dbReference>
<dbReference type="Pfam" id="PF17767">
    <property type="entry name" value="NAPRTase_N"/>
    <property type="match status" value="1"/>
</dbReference>
<dbReference type="PIRSF" id="PIRSF000484">
    <property type="entry name" value="NAPRT"/>
    <property type="match status" value="1"/>
</dbReference>
<dbReference type="SUPFAM" id="SSF51690">
    <property type="entry name" value="Nicotinate/Quinolinate PRTase C-terminal domain-like"/>
    <property type="match status" value="1"/>
</dbReference>
<dbReference type="SUPFAM" id="SSF54675">
    <property type="entry name" value="Nicotinate/Quinolinate PRTase N-terminal domain-like"/>
    <property type="match status" value="1"/>
</dbReference>
<protein>
    <recommendedName>
        <fullName evidence="1">Nicotinate phosphoribosyltransferase</fullName>
        <shortName evidence="1">NAPRTase</shortName>
        <ecNumber evidence="1">6.3.4.21</ecNumber>
    </recommendedName>
</protein>
<evidence type="ECO:0000255" key="1">
    <source>
        <dbReference type="HAMAP-Rule" id="MF_00570"/>
    </source>
</evidence>
<feature type="chain" id="PRO_1000146827" description="Nicotinate phosphoribosyltransferase">
    <location>
        <begin position="1"/>
        <end position="434"/>
    </location>
</feature>
<feature type="modified residue" description="Phosphohistidine; by autocatalysis" evidence="1">
    <location>
        <position position="242"/>
    </location>
</feature>
<comment type="function">
    <text evidence="1">Catalyzes the synthesis of beta-nicotinate D-ribonucleotide from nicotinate and 5-phospho-D-ribose 1-phosphate at the expense of ATP.</text>
</comment>
<comment type="catalytic activity">
    <reaction evidence="1">
        <text>nicotinate + 5-phospho-alpha-D-ribose 1-diphosphate + ATP + H2O = nicotinate beta-D-ribonucleotide + ADP + phosphate + diphosphate</text>
        <dbReference type="Rhea" id="RHEA:36163"/>
        <dbReference type="ChEBI" id="CHEBI:15377"/>
        <dbReference type="ChEBI" id="CHEBI:30616"/>
        <dbReference type="ChEBI" id="CHEBI:32544"/>
        <dbReference type="ChEBI" id="CHEBI:33019"/>
        <dbReference type="ChEBI" id="CHEBI:43474"/>
        <dbReference type="ChEBI" id="CHEBI:57502"/>
        <dbReference type="ChEBI" id="CHEBI:58017"/>
        <dbReference type="ChEBI" id="CHEBI:456216"/>
        <dbReference type="EC" id="6.3.4.21"/>
    </reaction>
</comment>
<comment type="pathway">
    <text evidence="1">Cofactor biosynthesis; NAD(+) biosynthesis; nicotinate D-ribonucleotide from nicotinate: step 1/1.</text>
</comment>
<comment type="PTM">
    <text evidence="1">Transiently phosphorylated on a His residue during the reaction cycle. Phosphorylation strongly increases the affinity for substrates and increases the rate of nicotinate D-ribonucleotide production. Dephosphorylation regenerates the low-affinity form of the enzyme, leading to product release.</text>
</comment>
<comment type="similarity">
    <text evidence="1">Belongs to the NAPRTase family.</text>
</comment>
<proteinExistence type="inferred from homology"/>
<sequence>MAKADIARRVYNHAWKLDPIVRSLLDTDFYKLLMLQMIWKLYPDVDVTFTLINRTTSVRIADEIDEAELRAQLDHVRTLGISKKELIWLAGNSFYGRTQIFEPEFLAWLSAIRLPAYELSKRDGQYELTFRGRWMETTLWEIPALAIINELRSRAALKSLGYFTLDVIYARAKAKMWEKVERLKQLPGLRISDFGTRRRHSFLWQRWCVEALKEGIGEAFTGTSNVLLAMDSDLEAVGTNAHELPMVAAALAKTDAELANAPYKVLQDWNTLYNGNLLIVLPDAFGTSAFLRDAPPWVADWTGFRPDSAPPIEGGERIIAWWEKMGRDPRQKLLIFSDGLDVDAIIDTYRHFEGRVRMSFGWGTNLTNDFIGCAPHDIAGLKPISIVCKITEANGRPAVKLSDNPLKATGEPAEVERYLKFFGSEDRVEHAVKV</sequence>
<name>PNCB_ALLAM</name>
<reference key="1">
    <citation type="journal article" date="2009" name="J. Bacteriol.">
        <title>Genome sequences of three Agrobacterium biovars help elucidate the evolution of multichromosome genomes in bacteria.</title>
        <authorList>
            <person name="Slater S.C."/>
            <person name="Goldman B.S."/>
            <person name="Goodner B."/>
            <person name="Setubal J.C."/>
            <person name="Farrand S.K."/>
            <person name="Nester E.W."/>
            <person name="Burr T.J."/>
            <person name="Banta L."/>
            <person name="Dickerman A.W."/>
            <person name="Paulsen I."/>
            <person name="Otten L."/>
            <person name="Suen G."/>
            <person name="Welch R."/>
            <person name="Almeida N.F."/>
            <person name="Arnold F."/>
            <person name="Burton O.T."/>
            <person name="Du Z."/>
            <person name="Ewing A."/>
            <person name="Godsy E."/>
            <person name="Heisel S."/>
            <person name="Houmiel K.L."/>
            <person name="Jhaveri J."/>
            <person name="Lu J."/>
            <person name="Miller N.M."/>
            <person name="Norton S."/>
            <person name="Chen Q."/>
            <person name="Phoolcharoen W."/>
            <person name="Ohlin V."/>
            <person name="Ondrusek D."/>
            <person name="Pride N."/>
            <person name="Stricklin S.L."/>
            <person name="Sun J."/>
            <person name="Wheeler C."/>
            <person name="Wilson L."/>
            <person name="Zhu H."/>
            <person name="Wood D.W."/>
        </authorList>
    </citation>
    <scope>NUCLEOTIDE SEQUENCE [LARGE SCALE GENOMIC DNA]</scope>
    <source>
        <strain>ATCC BAA-846 / DSM 112012 / S4</strain>
    </source>
</reference>
<accession>B9JYR4</accession>
<keyword id="KW-0436">Ligase</keyword>
<keyword id="KW-0597">Phosphoprotein</keyword>
<keyword id="KW-0662">Pyridine nucleotide biosynthesis</keyword>
<keyword id="KW-1185">Reference proteome</keyword>